<gene>
    <name evidence="1" type="primary">rpmG</name>
    <name type="ordered locus">lpg0478</name>
</gene>
<name>RL33_LEGPH</name>
<organism>
    <name type="scientific">Legionella pneumophila subsp. pneumophila (strain Philadelphia 1 / ATCC 33152 / DSM 7513)</name>
    <dbReference type="NCBI Taxonomy" id="272624"/>
    <lineage>
        <taxon>Bacteria</taxon>
        <taxon>Pseudomonadati</taxon>
        <taxon>Pseudomonadota</taxon>
        <taxon>Gammaproteobacteria</taxon>
        <taxon>Legionellales</taxon>
        <taxon>Legionellaceae</taxon>
        <taxon>Legionella</taxon>
    </lineage>
</organism>
<comment type="similarity">
    <text evidence="1">Belongs to the bacterial ribosomal protein bL33 family.</text>
</comment>
<feature type="chain" id="PRO_0000356525" description="Large ribosomal subunit protein bL33">
    <location>
        <begin position="1"/>
        <end position="54"/>
    </location>
</feature>
<keyword id="KW-1185">Reference proteome</keyword>
<keyword id="KW-0687">Ribonucleoprotein</keyword>
<keyword id="KW-0689">Ribosomal protein</keyword>
<sequence>MAAVTIKVKMESTAGTGYYKTTTKNPRNHPEKMELMMYDPKVRKHVLFKEKKVK</sequence>
<protein>
    <recommendedName>
        <fullName evidence="1">Large ribosomal subunit protein bL33</fullName>
    </recommendedName>
    <alternativeName>
        <fullName evidence="2">50S ribosomal protein L33</fullName>
    </alternativeName>
</protein>
<proteinExistence type="inferred from homology"/>
<evidence type="ECO:0000255" key="1">
    <source>
        <dbReference type="HAMAP-Rule" id="MF_00294"/>
    </source>
</evidence>
<evidence type="ECO:0000305" key="2"/>
<accession>Q5ZY94</accession>
<reference key="1">
    <citation type="journal article" date="2004" name="Science">
        <title>The genomic sequence of the accidental pathogen Legionella pneumophila.</title>
        <authorList>
            <person name="Chien M."/>
            <person name="Morozova I."/>
            <person name="Shi S."/>
            <person name="Sheng H."/>
            <person name="Chen J."/>
            <person name="Gomez S.M."/>
            <person name="Asamani G."/>
            <person name="Hill K."/>
            <person name="Nuara J."/>
            <person name="Feder M."/>
            <person name="Rineer J."/>
            <person name="Greenberg J.J."/>
            <person name="Steshenko V."/>
            <person name="Park S.H."/>
            <person name="Zhao B."/>
            <person name="Teplitskaya E."/>
            <person name="Edwards J.R."/>
            <person name="Pampou S."/>
            <person name="Georghiou A."/>
            <person name="Chou I.-C."/>
            <person name="Iannuccilli W."/>
            <person name="Ulz M.E."/>
            <person name="Kim D.H."/>
            <person name="Geringer-Sameth A."/>
            <person name="Goldsberry C."/>
            <person name="Morozov P."/>
            <person name="Fischer S.G."/>
            <person name="Segal G."/>
            <person name="Qu X."/>
            <person name="Rzhetsky A."/>
            <person name="Zhang P."/>
            <person name="Cayanis E."/>
            <person name="De Jong P.J."/>
            <person name="Ju J."/>
            <person name="Kalachikov S."/>
            <person name="Shuman H.A."/>
            <person name="Russo J.J."/>
        </authorList>
    </citation>
    <scope>NUCLEOTIDE SEQUENCE [LARGE SCALE GENOMIC DNA]</scope>
    <source>
        <strain>Philadelphia 1 / ATCC 33152 / DSM 7513</strain>
    </source>
</reference>
<dbReference type="EMBL" id="AE017354">
    <property type="protein sequence ID" value="AAU26575.1"/>
    <property type="molecule type" value="Genomic_DNA"/>
</dbReference>
<dbReference type="RefSeq" id="WP_003635328.1">
    <property type="nucleotide sequence ID" value="NC_002942.5"/>
</dbReference>
<dbReference type="RefSeq" id="YP_094522.1">
    <property type="nucleotide sequence ID" value="NC_002942.5"/>
</dbReference>
<dbReference type="SMR" id="Q5ZY94"/>
<dbReference type="STRING" id="272624.lpg0478"/>
<dbReference type="PaxDb" id="272624-lpg0478"/>
<dbReference type="GeneID" id="98066954"/>
<dbReference type="KEGG" id="lpn:lpg0478"/>
<dbReference type="PATRIC" id="fig|272624.6.peg.498"/>
<dbReference type="eggNOG" id="COG0267">
    <property type="taxonomic scope" value="Bacteria"/>
</dbReference>
<dbReference type="HOGENOM" id="CLU_190949_1_1_6"/>
<dbReference type="OrthoDB" id="21586at2"/>
<dbReference type="Proteomes" id="UP000000609">
    <property type="component" value="Chromosome"/>
</dbReference>
<dbReference type="GO" id="GO:0005737">
    <property type="term" value="C:cytoplasm"/>
    <property type="evidence" value="ECO:0007669"/>
    <property type="project" value="UniProtKB-ARBA"/>
</dbReference>
<dbReference type="GO" id="GO:0015934">
    <property type="term" value="C:large ribosomal subunit"/>
    <property type="evidence" value="ECO:0007669"/>
    <property type="project" value="TreeGrafter"/>
</dbReference>
<dbReference type="GO" id="GO:0003735">
    <property type="term" value="F:structural constituent of ribosome"/>
    <property type="evidence" value="ECO:0007669"/>
    <property type="project" value="InterPro"/>
</dbReference>
<dbReference type="GO" id="GO:0006412">
    <property type="term" value="P:translation"/>
    <property type="evidence" value="ECO:0007669"/>
    <property type="project" value="UniProtKB-UniRule"/>
</dbReference>
<dbReference type="Gene3D" id="2.20.28.120">
    <property type="entry name" value="Ribosomal protein L33"/>
    <property type="match status" value="1"/>
</dbReference>
<dbReference type="HAMAP" id="MF_00294">
    <property type="entry name" value="Ribosomal_bL33"/>
    <property type="match status" value="1"/>
</dbReference>
<dbReference type="InterPro" id="IPR001705">
    <property type="entry name" value="Ribosomal_bL33"/>
</dbReference>
<dbReference type="InterPro" id="IPR038584">
    <property type="entry name" value="Ribosomal_bL33_sf"/>
</dbReference>
<dbReference type="InterPro" id="IPR011332">
    <property type="entry name" value="Ribosomal_zn-bd"/>
</dbReference>
<dbReference type="NCBIfam" id="NF001860">
    <property type="entry name" value="PRK00595.1"/>
    <property type="match status" value="1"/>
</dbReference>
<dbReference type="NCBIfam" id="TIGR01023">
    <property type="entry name" value="rpmG_bact"/>
    <property type="match status" value="1"/>
</dbReference>
<dbReference type="PANTHER" id="PTHR15238">
    <property type="entry name" value="54S RIBOSOMAL PROTEIN L39, MITOCHONDRIAL"/>
    <property type="match status" value="1"/>
</dbReference>
<dbReference type="PANTHER" id="PTHR15238:SF1">
    <property type="entry name" value="LARGE RIBOSOMAL SUBUNIT PROTEIN BL33M"/>
    <property type="match status" value="1"/>
</dbReference>
<dbReference type="Pfam" id="PF00471">
    <property type="entry name" value="Ribosomal_L33"/>
    <property type="match status" value="1"/>
</dbReference>
<dbReference type="SUPFAM" id="SSF57829">
    <property type="entry name" value="Zn-binding ribosomal proteins"/>
    <property type="match status" value="1"/>
</dbReference>